<name>BIOD_XYLFT</name>
<evidence type="ECO:0000255" key="1">
    <source>
        <dbReference type="HAMAP-Rule" id="MF_00336"/>
    </source>
</evidence>
<organism>
    <name type="scientific">Xylella fastidiosa (strain Temecula1 / ATCC 700964)</name>
    <dbReference type="NCBI Taxonomy" id="183190"/>
    <lineage>
        <taxon>Bacteria</taxon>
        <taxon>Pseudomonadati</taxon>
        <taxon>Pseudomonadota</taxon>
        <taxon>Gammaproteobacteria</taxon>
        <taxon>Lysobacterales</taxon>
        <taxon>Lysobacteraceae</taxon>
        <taxon>Xylella</taxon>
    </lineage>
</organism>
<proteinExistence type="inferred from homology"/>
<protein>
    <recommendedName>
        <fullName evidence="1">ATP-dependent dethiobiotin synthetase BioD</fullName>
        <ecNumber evidence="1">6.3.3.3</ecNumber>
    </recommendedName>
    <alternativeName>
        <fullName evidence="1">DTB synthetase</fullName>
        <shortName evidence="1">DTBS</shortName>
    </alternativeName>
    <alternativeName>
        <fullName evidence="1">Dethiobiotin synthase</fullName>
    </alternativeName>
</protein>
<gene>
    <name evidence="1" type="primary">bioD</name>
    <name type="ordered locus">PD_1494</name>
</gene>
<comment type="function">
    <text evidence="1">Catalyzes a mechanistically unusual reaction, the ATP-dependent insertion of CO2 between the N7 and N8 nitrogen atoms of 7,8-diaminopelargonic acid (DAPA, also called 7,8-diammoniononanoate) to form a ureido ring.</text>
</comment>
<comment type="catalytic activity">
    <reaction evidence="1">
        <text>(7R,8S)-7,8-diammoniononanoate + CO2 + ATP = (4R,5S)-dethiobiotin + ADP + phosphate + 3 H(+)</text>
        <dbReference type="Rhea" id="RHEA:15805"/>
        <dbReference type="ChEBI" id="CHEBI:15378"/>
        <dbReference type="ChEBI" id="CHEBI:16526"/>
        <dbReference type="ChEBI" id="CHEBI:30616"/>
        <dbReference type="ChEBI" id="CHEBI:43474"/>
        <dbReference type="ChEBI" id="CHEBI:149469"/>
        <dbReference type="ChEBI" id="CHEBI:149473"/>
        <dbReference type="ChEBI" id="CHEBI:456216"/>
        <dbReference type="EC" id="6.3.3.3"/>
    </reaction>
</comment>
<comment type="cofactor">
    <cofactor evidence="1">
        <name>Mg(2+)</name>
        <dbReference type="ChEBI" id="CHEBI:18420"/>
    </cofactor>
</comment>
<comment type="pathway">
    <text evidence="1">Cofactor biosynthesis; biotin biosynthesis; biotin from 7,8-diaminononanoate: step 1/2.</text>
</comment>
<comment type="subunit">
    <text evidence="1">Homodimer.</text>
</comment>
<comment type="subcellular location">
    <subcellularLocation>
        <location evidence="1">Cytoplasm</location>
    </subcellularLocation>
</comment>
<comment type="similarity">
    <text evidence="1">Belongs to the dethiobiotin synthetase family.</text>
</comment>
<dbReference type="EC" id="6.3.3.3" evidence="1"/>
<dbReference type="EMBL" id="AE009442">
    <property type="protein sequence ID" value="AAO29338.1"/>
    <property type="molecule type" value="Genomic_DNA"/>
</dbReference>
<dbReference type="RefSeq" id="WP_004088506.1">
    <property type="nucleotide sequence ID" value="NC_004556.1"/>
</dbReference>
<dbReference type="SMR" id="Q87BG0"/>
<dbReference type="GeneID" id="93905317"/>
<dbReference type="KEGG" id="xft:PD_1494"/>
<dbReference type="HOGENOM" id="CLU_072551_0_0_6"/>
<dbReference type="UniPathway" id="UPA00078">
    <property type="reaction ID" value="UER00161"/>
</dbReference>
<dbReference type="Proteomes" id="UP000002516">
    <property type="component" value="Chromosome"/>
</dbReference>
<dbReference type="GO" id="GO:0005829">
    <property type="term" value="C:cytosol"/>
    <property type="evidence" value="ECO:0007669"/>
    <property type="project" value="TreeGrafter"/>
</dbReference>
<dbReference type="GO" id="GO:0005524">
    <property type="term" value="F:ATP binding"/>
    <property type="evidence" value="ECO:0007669"/>
    <property type="project" value="UniProtKB-UniRule"/>
</dbReference>
<dbReference type="GO" id="GO:0004141">
    <property type="term" value="F:dethiobiotin synthase activity"/>
    <property type="evidence" value="ECO:0007669"/>
    <property type="project" value="UniProtKB-UniRule"/>
</dbReference>
<dbReference type="GO" id="GO:0000287">
    <property type="term" value="F:magnesium ion binding"/>
    <property type="evidence" value="ECO:0007669"/>
    <property type="project" value="UniProtKB-UniRule"/>
</dbReference>
<dbReference type="GO" id="GO:0009102">
    <property type="term" value="P:biotin biosynthetic process"/>
    <property type="evidence" value="ECO:0007669"/>
    <property type="project" value="UniProtKB-UniRule"/>
</dbReference>
<dbReference type="CDD" id="cd03109">
    <property type="entry name" value="DTBS"/>
    <property type="match status" value="1"/>
</dbReference>
<dbReference type="FunFam" id="3.40.50.300:FF:000292">
    <property type="entry name" value="ATP-dependent dethiobiotin synthetase BioD"/>
    <property type="match status" value="1"/>
</dbReference>
<dbReference type="Gene3D" id="3.40.50.300">
    <property type="entry name" value="P-loop containing nucleotide triphosphate hydrolases"/>
    <property type="match status" value="1"/>
</dbReference>
<dbReference type="HAMAP" id="MF_00336">
    <property type="entry name" value="BioD"/>
    <property type="match status" value="1"/>
</dbReference>
<dbReference type="InterPro" id="IPR004472">
    <property type="entry name" value="DTB_synth_BioD"/>
</dbReference>
<dbReference type="InterPro" id="IPR027417">
    <property type="entry name" value="P-loop_NTPase"/>
</dbReference>
<dbReference type="NCBIfam" id="TIGR00347">
    <property type="entry name" value="bioD"/>
    <property type="match status" value="1"/>
</dbReference>
<dbReference type="PANTHER" id="PTHR43210">
    <property type="entry name" value="DETHIOBIOTIN SYNTHETASE"/>
    <property type="match status" value="1"/>
</dbReference>
<dbReference type="PANTHER" id="PTHR43210:SF5">
    <property type="entry name" value="DETHIOBIOTIN SYNTHETASE"/>
    <property type="match status" value="1"/>
</dbReference>
<dbReference type="Pfam" id="PF13500">
    <property type="entry name" value="AAA_26"/>
    <property type="match status" value="1"/>
</dbReference>
<dbReference type="PIRSF" id="PIRSF006755">
    <property type="entry name" value="DTB_synth"/>
    <property type="match status" value="1"/>
</dbReference>
<dbReference type="SUPFAM" id="SSF52540">
    <property type="entry name" value="P-loop containing nucleoside triphosphate hydrolases"/>
    <property type="match status" value="1"/>
</dbReference>
<sequence>MSLSDFYVTGTDTGIGKTFVSCILLHMLRGRGQRAVGMKPVASGCTYSDTGWRNEDALALQAASDPTPAYDLINPYALPAAVAPEIAAIEAGVTVALEPLSASFTQLRAQADVVVVEGVGGWATPLNATFDQATLVRALEIPVVLVVGLRLGCMNHARLSTAAIMADGLRCIGWIANTIDPHMARIEENLALLRQRLPIPYWGHLPHIPPGINPATLATRLHPQGD</sequence>
<keyword id="KW-0067">ATP-binding</keyword>
<keyword id="KW-0093">Biotin biosynthesis</keyword>
<keyword id="KW-0963">Cytoplasm</keyword>
<keyword id="KW-0436">Ligase</keyword>
<keyword id="KW-0460">Magnesium</keyword>
<keyword id="KW-0479">Metal-binding</keyword>
<keyword id="KW-0547">Nucleotide-binding</keyword>
<keyword id="KW-1185">Reference proteome</keyword>
<feature type="chain" id="PRO_0000188001" description="ATP-dependent dethiobiotin synthetase BioD">
    <location>
        <begin position="1"/>
        <end position="226"/>
    </location>
</feature>
<feature type="active site" evidence="1">
    <location>
        <position position="39"/>
    </location>
</feature>
<feature type="binding site" evidence="1">
    <location>
        <begin position="14"/>
        <end position="19"/>
    </location>
    <ligand>
        <name>ATP</name>
        <dbReference type="ChEBI" id="CHEBI:30616"/>
    </ligand>
</feature>
<feature type="binding site" evidence="1">
    <location>
        <position position="18"/>
    </location>
    <ligand>
        <name>Mg(2+)</name>
        <dbReference type="ChEBI" id="CHEBI:18420"/>
    </ligand>
</feature>
<feature type="binding site" evidence="1">
    <location>
        <position position="43"/>
    </location>
    <ligand>
        <name>substrate</name>
    </ligand>
</feature>
<feature type="binding site" evidence="1">
    <location>
        <position position="56"/>
    </location>
    <ligand>
        <name>ATP</name>
        <dbReference type="ChEBI" id="CHEBI:30616"/>
    </ligand>
</feature>
<feature type="binding site" evidence="1">
    <location>
        <position position="56"/>
    </location>
    <ligand>
        <name>Mg(2+)</name>
        <dbReference type="ChEBI" id="CHEBI:18420"/>
    </ligand>
</feature>
<feature type="binding site" evidence="1">
    <location>
        <begin position="117"/>
        <end position="120"/>
    </location>
    <ligand>
        <name>ATP</name>
        <dbReference type="ChEBI" id="CHEBI:30616"/>
    </ligand>
</feature>
<feature type="binding site" evidence="1">
    <location>
        <position position="117"/>
    </location>
    <ligand>
        <name>Mg(2+)</name>
        <dbReference type="ChEBI" id="CHEBI:18420"/>
    </ligand>
</feature>
<feature type="binding site" evidence="1">
    <location>
        <begin position="177"/>
        <end position="178"/>
    </location>
    <ligand>
        <name>ATP</name>
        <dbReference type="ChEBI" id="CHEBI:30616"/>
    </ligand>
</feature>
<feature type="binding site" evidence="1">
    <location>
        <begin position="206"/>
        <end position="208"/>
    </location>
    <ligand>
        <name>ATP</name>
        <dbReference type="ChEBI" id="CHEBI:30616"/>
    </ligand>
</feature>
<feature type="binding site" evidence="1">
    <location>
        <position position="213"/>
    </location>
    <ligand>
        <name>ATP</name>
        <dbReference type="ChEBI" id="CHEBI:30616"/>
    </ligand>
</feature>
<reference key="1">
    <citation type="journal article" date="2003" name="J. Bacteriol.">
        <title>Comparative analyses of the complete genome sequences of Pierce's disease and citrus variegated chlorosis strains of Xylella fastidiosa.</title>
        <authorList>
            <person name="Van Sluys M.A."/>
            <person name="de Oliveira M.C."/>
            <person name="Monteiro-Vitorello C.B."/>
            <person name="Miyaki C.Y."/>
            <person name="Furlan L.R."/>
            <person name="Camargo L.E.A."/>
            <person name="da Silva A.C.R."/>
            <person name="Moon D.H."/>
            <person name="Takita M.A."/>
            <person name="Lemos E.G.M."/>
            <person name="Machado M.A."/>
            <person name="Ferro M.I.T."/>
            <person name="da Silva F.R."/>
            <person name="Goldman M.H.S."/>
            <person name="Goldman G.H."/>
            <person name="Lemos M.V.F."/>
            <person name="El-Dorry H."/>
            <person name="Tsai S.M."/>
            <person name="Carrer H."/>
            <person name="Carraro D.M."/>
            <person name="de Oliveira R.C."/>
            <person name="Nunes L.R."/>
            <person name="Siqueira W.J."/>
            <person name="Coutinho L.L."/>
            <person name="Kimura E.T."/>
            <person name="Ferro E.S."/>
            <person name="Harakava R."/>
            <person name="Kuramae E.E."/>
            <person name="Marino C.L."/>
            <person name="Giglioti E."/>
            <person name="Abreu I.L."/>
            <person name="Alves L.M.C."/>
            <person name="do Amaral A.M."/>
            <person name="Baia G.S."/>
            <person name="Blanco S.R."/>
            <person name="Brito M.S."/>
            <person name="Cannavan F.S."/>
            <person name="Celestino A.V."/>
            <person name="da Cunha A.F."/>
            <person name="Fenille R.C."/>
            <person name="Ferro J.A."/>
            <person name="Formighieri E.F."/>
            <person name="Kishi L.T."/>
            <person name="Leoni S.G."/>
            <person name="Oliveira A.R."/>
            <person name="Rosa V.E. Jr."/>
            <person name="Sassaki F.T."/>
            <person name="Sena J.A.D."/>
            <person name="de Souza A.A."/>
            <person name="Truffi D."/>
            <person name="Tsukumo F."/>
            <person name="Yanai G.M."/>
            <person name="Zaros L.G."/>
            <person name="Civerolo E.L."/>
            <person name="Simpson A.J.G."/>
            <person name="Almeida N.F. Jr."/>
            <person name="Setubal J.C."/>
            <person name="Kitajima J.P."/>
        </authorList>
    </citation>
    <scope>NUCLEOTIDE SEQUENCE [LARGE SCALE GENOMIC DNA]</scope>
    <source>
        <strain>Temecula1 / ATCC 700964</strain>
    </source>
</reference>
<accession>Q87BG0</accession>